<dbReference type="EMBL" id="AF011378">
    <property type="protein sequence ID" value="AAB70055.1"/>
    <property type="molecule type" value="Genomic_DNA"/>
</dbReference>
<dbReference type="RefSeq" id="NP_044962.1">
    <property type="nucleotide sequence ID" value="NC_001835.1"/>
</dbReference>
<dbReference type="SMR" id="O21884"/>
<dbReference type="GeneID" id="1261276"/>
<dbReference type="KEGG" id="vg:1261276"/>
<dbReference type="Proteomes" id="UP000000839">
    <property type="component" value="Genome"/>
</dbReference>
<dbReference type="GO" id="GO:0098025">
    <property type="term" value="C:virus tail, baseplate"/>
    <property type="evidence" value="ECO:0007669"/>
    <property type="project" value="UniProtKB-KW"/>
</dbReference>
<dbReference type="GO" id="GO:0099001">
    <property type="term" value="P:symbiont genome ejection through host cell envelope, long flexible tail mechanism"/>
    <property type="evidence" value="ECO:0007669"/>
    <property type="project" value="UniProtKB-KW"/>
</dbReference>
<dbReference type="Gene3D" id="2.30.300.20">
    <property type="match status" value="1"/>
</dbReference>
<dbReference type="Gene3D" id="3.30.1920.20">
    <property type="match status" value="1"/>
</dbReference>
<dbReference type="Gene3D" id="3.55.50.50">
    <property type="entry name" value="Baseplate protein Gp16, domain 2"/>
    <property type="match status" value="1"/>
</dbReference>
<dbReference type="InterPro" id="IPR031861">
    <property type="entry name" value="Caud_bapl16_1st"/>
</dbReference>
<dbReference type="InterPro" id="IPR048784">
    <property type="entry name" value="Caud_bapl16_2nd"/>
</dbReference>
<dbReference type="InterPro" id="IPR048783">
    <property type="entry name" value="Caud_bapl16_3rd"/>
</dbReference>
<dbReference type="InterPro" id="IPR048782">
    <property type="entry name" value="Caud_bapl16_4th"/>
</dbReference>
<dbReference type="InterPro" id="IPR043075">
    <property type="entry name" value="Gp16_dom1_2"/>
</dbReference>
<dbReference type="InterPro" id="IPR043073">
    <property type="entry name" value="Gp16_domD4"/>
</dbReference>
<dbReference type="Pfam" id="PF16792">
    <property type="entry name" value="Caud_bapl16_1st"/>
    <property type="match status" value="1"/>
</dbReference>
<dbReference type="Pfam" id="PF20954">
    <property type="entry name" value="Caud_bapl16_2nd"/>
    <property type="match status" value="1"/>
</dbReference>
<dbReference type="Pfam" id="PF20953">
    <property type="entry name" value="Caud_bapl16_3rd"/>
    <property type="match status" value="1"/>
</dbReference>
<dbReference type="Pfam" id="PF20955">
    <property type="entry name" value="Caud_bapl16_4th"/>
    <property type="match status" value="1"/>
</dbReference>
<feature type="chain" id="PRO_0000438266" description="Baseplate protein gp16">
    <location>
        <begin position="1"/>
        <end position="375"/>
    </location>
</feature>
<proteinExistence type="inferred from homology"/>
<sequence>MLEANVYDNFNPNYYNVSDFSMPNGKKEKRGLPIPKARCQVINYELWETGYLYTSSATLTVSVEVGDIVQILFPEVVPIEEALGKKKKLNLDMVYLVTDVDESNKATLKNYFWAMIESLDVPNAITKTTNFAIIDYLIDPSKNNLMSYGYFFNSSIFAGKATINRKAETSSAHDVAKRIFSKVQFQPTTTIQHAPSETDPRNLLFINFASRNWNRKRITTRVDIKQSVTMDTETIVERSAYNFAVVFVKNKATDDYTDPPKMYIAKNNGDVIDYSTYHGDGTDLPDVRTAKTLFYDRDDHGNPPALSTIKVEISPSTIVTRLIFNQNELLPLYVNDLVDIWYEGKLYSGYIADRVKTEFNDRLIFVESGDKPNVI</sequence>
<organismHost>
    <name type="scientific">Lactococcus lactis</name>
    <dbReference type="NCBI Taxonomy" id="1358"/>
</organismHost>
<keyword id="KW-1185">Reference proteome</keyword>
<keyword id="KW-1226">Viral baseplate protein</keyword>
<keyword id="KW-1171">Viral genome ejection through host cell envelope</keyword>
<keyword id="KW-1243">Viral long flexible tail ejection system</keyword>
<keyword id="KW-1162">Viral penetration into host cytoplasm</keyword>
<keyword id="KW-1227">Viral tail protein</keyword>
<keyword id="KW-0946">Virion</keyword>
<keyword id="KW-1160">Virus entry into host cell</keyword>
<evidence type="ECO:0000250" key="1">
    <source>
        <dbReference type="UniProtKB" id="D3WAD4"/>
    </source>
</evidence>
<evidence type="ECO:0000305" key="2"/>
<protein>
    <recommendedName>
        <fullName evidence="2">Baseplate protein gp16</fullName>
    </recommendedName>
    <alternativeName>
        <fullName evidence="2">Exolysin</fullName>
    </alternativeName>
    <alternativeName>
        <fullName evidence="2">Gene product 16</fullName>
        <shortName evidence="2">Gp16</shortName>
    </alternativeName>
    <alternativeName>
        <fullName evidence="1">Tail lysozyme-like</fullName>
    </alternativeName>
    <alternativeName>
        <fullName>Tail-associated lysine-like protein</fullName>
    </alternativeName>
</protein>
<organism>
    <name type="scientific">Lactococcus phage SK1</name>
    <name type="common">Lactococcus lactis bacteriophage SK1</name>
    <dbReference type="NCBI Taxonomy" id="2905675"/>
    <lineage>
        <taxon>Viruses</taxon>
        <taxon>Duplodnaviria</taxon>
        <taxon>Heunggongvirae</taxon>
        <taxon>Uroviricota</taxon>
        <taxon>Caudoviricetes</taxon>
        <taxon>Skunavirus</taxon>
        <taxon>Skunavirus sk1</taxon>
    </lineage>
</organism>
<comment type="function">
    <text evidence="1">Forms a dome thereby closing the central channel at the end of the baseplate. Changes its conformation upon activation by calcium allowing the channel to open at the bottom of the baseplate for DNA ejection.</text>
</comment>
<comment type="subunit">
    <text evidence="1">Homotrimer.</text>
</comment>
<comment type="subcellular location">
    <subcellularLocation>
        <location evidence="1">Virion</location>
    </subcellularLocation>
    <text evidence="1">Part of the baseplate.</text>
</comment>
<comment type="similarity">
    <text evidence="2">Belongs to the skunalikevirus baseplate protein gp16 family.</text>
</comment>
<name>GP16_BPLSK</name>
<reference key="1">
    <citation type="journal article" date="1997" name="Mol. Microbiol.">
        <title>Analysis of the DNA sequence, gene expression, origin of replication and modular structure of the Lactococcus lactis lytic bacteriophage sk1.</title>
        <authorList>
            <person name="Chandry P.S."/>
            <person name="Moore S.C."/>
            <person name="Boyce J.D."/>
            <person name="Davidson B.E."/>
            <person name="Hillier A.J."/>
        </authorList>
    </citation>
    <scope>NUCLEOTIDE SEQUENCE [LARGE SCALE GENOMIC DNA]</scope>
</reference>
<accession>O21884</accession>